<name>ATPD_COXB2</name>
<sequence length="185" mass="21189">MALHLTLARPYAKAAFADGQKANQLEAWLAVFTAFSKIIKNKEVARQIINPKFSDKEIKTLLFDLIQTIEPESTKQLKDKIDHFLQLLIDEKRLMILPDIALVYQQLLNKYQGIIEASVTYVFPLNDEHRQQIQKQLEKRFNAEVKLKMIKDESLLGGVIIRAGNWVMDGSIKGKLTRLAENLKG</sequence>
<keyword id="KW-0066">ATP synthesis</keyword>
<keyword id="KW-0997">Cell inner membrane</keyword>
<keyword id="KW-1003">Cell membrane</keyword>
<keyword id="KW-0139">CF(1)</keyword>
<keyword id="KW-0375">Hydrogen ion transport</keyword>
<keyword id="KW-0406">Ion transport</keyword>
<keyword id="KW-0472">Membrane</keyword>
<keyword id="KW-0813">Transport</keyword>
<evidence type="ECO:0000255" key="1">
    <source>
        <dbReference type="HAMAP-Rule" id="MF_01416"/>
    </source>
</evidence>
<reference key="1">
    <citation type="journal article" date="2009" name="Infect. Immun.">
        <title>Comparative genomics reveal extensive transposon-mediated genomic plasticity and diversity among potential effector proteins within the genus Coxiella.</title>
        <authorList>
            <person name="Beare P.A."/>
            <person name="Unsworth N."/>
            <person name="Andoh M."/>
            <person name="Voth D.E."/>
            <person name="Omsland A."/>
            <person name="Gilk S.D."/>
            <person name="Williams K.P."/>
            <person name="Sobral B.W."/>
            <person name="Kupko J.J. III"/>
            <person name="Porcella S.F."/>
            <person name="Samuel J.E."/>
            <person name="Heinzen R.A."/>
        </authorList>
    </citation>
    <scope>NUCLEOTIDE SEQUENCE [LARGE SCALE GENOMIC DNA]</scope>
    <source>
        <strain>CbuG_Q212</strain>
    </source>
</reference>
<accession>B6J2D7</accession>
<protein>
    <recommendedName>
        <fullName evidence="1">ATP synthase subunit delta</fullName>
    </recommendedName>
    <alternativeName>
        <fullName evidence="1">ATP synthase F(1) sector subunit delta</fullName>
    </alternativeName>
    <alternativeName>
        <fullName evidence="1">F-type ATPase subunit delta</fullName>
        <shortName evidence="1">F-ATPase subunit delta</shortName>
    </alternativeName>
</protein>
<proteinExistence type="inferred from homology"/>
<comment type="function">
    <text evidence="1">F(1)F(0) ATP synthase produces ATP from ADP in the presence of a proton or sodium gradient. F-type ATPases consist of two structural domains, F(1) containing the extramembraneous catalytic core and F(0) containing the membrane proton channel, linked together by a central stalk and a peripheral stalk. During catalysis, ATP synthesis in the catalytic domain of F(1) is coupled via a rotary mechanism of the central stalk subunits to proton translocation.</text>
</comment>
<comment type="function">
    <text evidence="1">This protein is part of the stalk that links CF(0) to CF(1). It either transmits conformational changes from CF(0) to CF(1) or is implicated in proton conduction.</text>
</comment>
<comment type="subunit">
    <text evidence="1">F-type ATPases have 2 components, F(1) - the catalytic core - and F(0) - the membrane proton channel. F(1) has five subunits: alpha(3), beta(3), gamma(1), delta(1), epsilon(1). F(0) has three main subunits: a(1), b(2) and c(10-14). The alpha and beta chains form an alternating ring which encloses part of the gamma chain. F(1) is attached to F(0) by a central stalk formed by the gamma and epsilon chains, while a peripheral stalk is formed by the delta and b chains.</text>
</comment>
<comment type="subcellular location">
    <subcellularLocation>
        <location evidence="1">Cell inner membrane</location>
        <topology evidence="1">Peripheral membrane protein</topology>
    </subcellularLocation>
</comment>
<comment type="similarity">
    <text evidence="1">Belongs to the ATPase delta chain family.</text>
</comment>
<gene>
    <name evidence="1" type="primary">atpH</name>
    <name type="ordered locus">CbuG_0053</name>
</gene>
<dbReference type="EMBL" id="CP001019">
    <property type="protein sequence ID" value="ACJ17511.1"/>
    <property type="molecule type" value="Genomic_DNA"/>
</dbReference>
<dbReference type="RefSeq" id="WP_010958555.1">
    <property type="nucleotide sequence ID" value="NC_011527.1"/>
</dbReference>
<dbReference type="SMR" id="B6J2D7"/>
<dbReference type="KEGG" id="cbg:CbuG_0053"/>
<dbReference type="HOGENOM" id="CLU_085114_3_0_6"/>
<dbReference type="GO" id="GO:0005886">
    <property type="term" value="C:plasma membrane"/>
    <property type="evidence" value="ECO:0007669"/>
    <property type="project" value="UniProtKB-SubCell"/>
</dbReference>
<dbReference type="GO" id="GO:0045259">
    <property type="term" value="C:proton-transporting ATP synthase complex"/>
    <property type="evidence" value="ECO:0007669"/>
    <property type="project" value="UniProtKB-KW"/>
</dbReference>
<dbReference type="GO" id="GO:0046933">
    <property type="term" value="F:proton-transporting ATP synthase activity, rotational mechanism"/>
    <property type="evidence" value="ECO:0007669"/>
    <property type="project" value="UniProtKB-UniRule"/>
</dbReference>
<dbReference type="Gene3D" id="1.10.520.20">
    <property type="entry name" value="N-terminal domain of the delta subunit of the F1F0-ATP synthase"/>
    <property type="match status" value="1"/>
</dbReference>
<dbReference type="HAMAP" id="MF_01416">
    <property type="entry name" value="ATP_synth_delta_bact"/>
    <property type="match status" value="1"/>
</dbReference>
<dbReference type="InterPro" id="IPR026015">
    <property type="entry name" value="ATP_synth_OSCP/delta_N_sf"/>
</dbReference>
<dbReference type="InterPro" id="IPR000711">
    <property type="entry name" value="ATPase_OSCP/dsu"/>
</dbReference>
<dbReference type="NCBIfam" id="TIGR01145">
    <property type="entry name" value="ATP_synt_delta"/>
    <property type="match status" value="1"/>
</dbReference>
<dbReference type="NCBIfam" id="NF004402">
    <property type="entry name" value="PRK05758.2-2"/>
    <property type="match status" value="1"/>
</dbReference>
<dbReference type="PANTHER" id="PTHR11910">
    <property type="entry name" value="ATP SYNTHASE DELTA CHAIN"/>
    <property type="match status" value="1"/>
</dbReference>
<dbReference type="Pfam" id="PF00213">
    <property type="entry name" value="OSCP"/>
    <property type="match status" value="1"/>
</dbReference>
<dbReference type="PRINTS" id="PR00125">
    <property type="entry name" value="ATPASEDELTA"/>
</dbReference>
<dbReference type="SUPFAM" id="SSF47928">
    <property type="entry name" value="N-terminal domain of the delta subunit of the F1F0-ATP synthase"/>
    <property type="match status" value="1"/>
</dbReference>
<organism>
    <name type="scientific">Coxiella burnetii (strain CbuG_Q212)</name>
    <name type="common">Coxiella burnetii (strain Q212)</name>
    <dbReference type="NCBI Taxonomy" id="434923"/>
    <lineage>
        <taxon>Bacteria</taxon>
        <taxon>Pseudomonadati</taxon>
        <taxon>Pseudomonadota</taxon>
        <taxon>Gammaproteobacteria</taxon>
        <taxon>Legionellales</taxon>
        <taxon>Coxiellaceae</taxon>
        <taxon>Coxiella</taxon>
    </lineage>
</organism>
<feature type="chain" id="PRO_1000184683" description="ATP synthase subunit delta">
    <location>
        <begin position="1"/>
        <end position="185"/>
    </location>
</feature>